<sequence length="451" mass="51307">MNAHPKEIWEQCLNIIKGETTEVSFNTWIKSITPISIENDTFMLTVPNDLTKGILSNKYTDLIIRSLQMVTSQKYNVKFLISSELPEEFLTLDTINEQNIKGSIIVSDEMSAMLNPKYTFTSFVIGNSNRFAHAASLAVAESPAKAYNPLFIYGGVGLGKTHLMHAIGHHILHNNTSCKVVYVSSEKFTNELINSIKDDKNVEFRSKYRNIDVLLIDDIQFIAGKERTQEEFFHTFNALYEANKQIILSSDRPPKEIPTLEDRLRSRFEWGLIADIQPPDFETRMAILKKKADVEKLNIPNEVMAYIATKIKSNIRELEGALIRIVAFSSLTNKEISVDLAIEALKDIISSGQSKQVTIELIQDVVSNYYNLKVSDFKSSRRTRNVAFPRQIAMYLCRKLTDMSLPKIGEEFGGRDHTTVIHAYEKISNNLKKDESLKNAVNDLTKRLDQQ</sequence>
<proteinExistence type="inferred from homology"/>
<gene>
    <name evidence="1" type="primary">dnaA</name>
    <name type="ordered locus">CKL_0001</name>
</gene>
<reference key="1">
    <citation type="journal article" date="2008" name="Proc. Natl. Acad. Sci. U.S.A.">
        <title>The genome of Clostridium kluyveri, a strict anaerobe with unique metabolic features.</title>
        <authorList>
            <person name="Seedorf H."/>
            <person name="Fricke W.F."/>
            <person name="Veith B."/>
            <person name="Brueggemann H."/>
            <person name="Liesegang H."/>
            <person name="Strittmatter A."/>
            <person name="Miethke M."/>
            <person name="Buckel W."/>
            <person name="Hinderberger J."/>
            <person name="Li F."/>
            <person name="Hagemeier C."/>
            <person name="Thauer R.K."/>
            <person name="Gottschalk G."/>
        </authorList>
    </citation>
    <scope>NUCLEOTIDE SEQUENCE [LARGE SCALE GENOMIC DNA]</scope>
    <source>
        <strain>ATCC 8527 / DSM 555 / NBRC 12016 / NCIMB 10680 / K1</strain>
    </source>
</reference>
<keyword id="KW-0067">ATP-binding</keyword>
<keyword id="KW-0963">Cytoplasm</keyword>
<keyword id="KW-0235">DNA replication</keyword>
<keyword id="KW-0238">DNA-binding</keyword>
<keyword id="KW-0446">Lipid-binding</keyword>
<keyword id="KW-0547">Nucleotide-binding</keyword>
<keyword id="KW-1185">Reference proteome</keyword>
<dbReference type="EMBL" id="CP000673">
    <property type="protein sequence ID" value="EDK32088.1"/>
    <property type="molecule type" value="Genomic_DNA"/>
</dbReference>
<dbReference type="RefSeq" id="WP_011988614.1">
    <property type="nucleotide sequence ID" value="NC_009706.1"/>
</dbReference>
<dbReference type="SMR" id="A5N457"/>
<dbReference type="STRING" id="431943.CKL_0001"/>
<dbReference type="KEGG" id="ckl:CKL_0001"/>
<dbReference type="eggNOG" id="COG0593">
    <property type="taxonomic scope" value="Bacteria"/>
</dbReference>
<dbReference type="HOGENOM" id="CLU_026910_3_1_9"/>
<dbReference type="Proteomes" id="UP000002411">
    <property type="component" value="Chromosome"/>
</dbReference>
<dbReference type="GO" id="GO:0005737">
    <property type="term" value="C:cytoplasm"/>
    <property type="evidence" value="ECO:0007669"/>
    <property type="project" value="UniProtKB-SubCell"/>
</dbReference>
<dbReference type="GO" id="GO:0005886">
    <property type="term" value="C:plasma membrane"/>
    <property type="evidence" value="ECO:0007669"/>
    <property type="project" value="TreeGrafter"/>
</dbReference>
<dbReference type="GO" id="GO:0005524">
    <property type="term" value="F:ATP binding"/>
    <property type="evidence" value="ECO:0007669"/>
    <property type="project" value="UniProtKB-UniRule"/>
</dbReference>
<dbReference type="GO" id="GO:0016887">
    <property type="term" value="F:ATP hydrolysis activity"/>
    <property type="evidence" value="ECO:0007669"/>
    <property type="project" value="InterPro"/>
</dbReference>
<dbReference type="GO" id="GO:0003688">
    <property type="term" value="F:DNA replication origin binding"/>
    <property type="evidence" value="ECO:0007669"/>
    <property type="project" value="UniProtKB-UniRule"/>
</dbReference>
<dbReference type="GO" id="GO:0008289">
    <property type="term" value="F:lipid binding"/>
    <property type="evidence" value="ECO:0007669"/>
    <property type="project" value="UniProtKB-KW"/>
</dbReference>
<dbReference type="GO" id="GO:0006270">
    <property type="term" value="P:DNA replication initiation"/>
    <property type="evidence" value="ECO:0007669"/>
    <property type="project" value="UniProtKB-UniRule"/>
</dbReference>
<dbReference type="GO" id="GO:0006275">
    <property type="term" value="P:regulation of DNA replication"/>
    <property type="evidence" value="ECO:0007669"/>
    <property type="project" value="UniProtKB-UniRule"/>
</dbReference>
<dbReference type="CDD" id="cd00009">
    <property type="entry name" value="AAA"/>
    <property type="match status" value="1"/>
</dbReference>
<dbReference type="CDD" id="cd06571">
    <property type="entry name" value="Bac_DnaA_C"/>
    <property type="match status" value="1"/>
</dbReference>
<dbReference type="FunFam" id="1.10.1750.10:FF:000003">
    <property type="entry name" value="Chromosomal replication initiator protein DnaA"/>
    <property type="match status" value="1"/>
</dbReference>
<dbReference type="FunFam" id="1.10.8.60:FF:000003">
    <property type="entry name" value="Chromosomal replication initiator protein DnaA"/>
    <property type="match status" value="1"/>
</dbReference>
<dbReference type="FunFam" id="3.40.50.300:FF:000150">
    <property type="entry name" value="Chromosomal replication initiator protein DnaA"/>
    <property type="match status" value="1"/>
</dbReference>
<dbReference type="Gene3D" id="1.10.1750.10">
    <property type="match status" value="1"/>
</dbReference>
<dbReference type="Gene3D" id="1.10.8.60">
    <property type="match status" value="1"/>
</dbReference>
<dbReference type="Gene3D" id="3.30.300.180">
    <property type="match status" value="1"/>
</dbReference>
<dbReference type="Gene3D" id="3.40.50.300">
    <property type="entry name" value="P-loop containing nucleotide triphosphate hydrolases"/>
    <property type="match status" value="1"/>
</dbReference>
<dbReference type="HAMAP" id="MF_00377">
    <property type="entry name" value="DnaA_bact"/>
    <property type="match status" value="1"/>
</dbReference>
<dbReference type="InterPro" id="IPR003593">
    <property type="entry name" value="AAA+_ATPase"/>
</dbReference>
<dbReference type="InterPro" id="IPR001957">
    <property type="entry name" value="Chromosome_initiator_DnaA"/>
</dbReference>
<dbReference type="InterPro" id="IPR020591">
    <property type="entry name" value="Chromosome_initiator_DnaA-like"/>
</dbReference>
<dbReference type="InterPro" id="IPR018312">
    <property type="entry name" value="Chromosome_initiator_DnaA_CS"/>
</dbReference>
<dbReference type="InterPro" id="IPR013159">
    <property type="entry name" value="DnaA_C"/>
</dbReference>
<dbReference type="InterPro" id="IPR013317">
    <property type="entry name" value="DnaA_dom"/>
</dbReference>
<dbReference type="InterPro" id="IPR024633">
    <property type="entry name" value="DnaA_N_dom"/>
</dbReference>
<dbReference type="InterPro" id="IPR038454">
    <property type="entry name" value="DnaA_N_sf"/>
</dbReference>
<dbReference type="InterPro" id="IPR027417">
    <property type="entry name" value="P-loop_NTPase"/>
</dbReference>
<dbReference type="InterPro" id="IPR010921">
    <property type="entry name" value="Trp_repressor/repl_initiator"/>
</dbReference>
<dbReference type="NCBIfam" id="TIGR00362">
    <property type="entry name" value="DnaA"/>
    <property type="match status" value="1"/>
</dbReference>
<dbReference type="NCBIfam" id="NF010686">
    <property type="entry name" value="PRK14086.1"/>
    <property type="match status" value="1"/>
</dbReference>
<dbReference type="PANTHER" id="PTHR30050">
    <property type="entry name" value="CHROMOSOMAL REPLICATION INITIATOR PROTEIN DNAA"/>
    <property type="match status" value="1"/>
</dbReference>
<dbReference type="PANTHER" id="PTHR30050:SF2">
    <property type="entry name" value="CHROMOSOMAL REPLICATION INITIATOR PROTEIN DNAA"/>
    <property type="match status" value="1"/>
</dbReference>
<dbReference type="Pfam" id="PF00308">
    <property type="entry name" value="Bac_DnaA"/>
    <property type="match status" value="1"/>
</dbReference>
<dbReference type="Pfam" id="PF08299">
    <property type="entry name" value="Bac_DnaA_C"/>
    <property type="match status" value="1"/>
</dbReference>
<dbReference type="Pfam" id="PF11638">
    <property type="entry name" value="DnaA_N"/>
    <property type="match status" value="1"/>
</dbReference>
<dbReference type="PRINTS" id="PR00051">
    <property type="entry name" value="DNAA"/>
</dbReference>
<dbReference type="SMART" id="SM00382">
    <property type="entry name" value="AAA"/>
    <property type="match status" value="1"/>
</dbReference>
<dbReference type="SMART" id="SM00760">
    <property type="entry name" value="Bac_DnaA_C"/>
    <property type="match status" value="1"/>
</dbReference>
<dbReference type="SUPFAM" id="SSF52540">
    <property type="entry name" value="P-loop containing nucleoside triphosphate hydrolases"/>
    <property type="match status" value="1"/>
</dbReference>
<dbReference type="SUPFAM" id="SSF48295">
    <property type="entry name" value="TrpR-like"/>
    <property type="match status" value="1"/>
</dbReference>
<dbReference type="PROSITE" id="PS01008">
    <property type="entry name" value="DNAA"/>
    <property type="match status" value="1"/>
</dbReference>
<protein>
    <recommendedName>
        <fullName evidence="1">Chromosomal replication initiator protein DnaA</fullName>
    </recommendedName>
</protein>
<accession>A5N457</accession>
<evidence type="ECO:0000255" key="1">
    <source>
        <dbReference type="HAMAP-Rule" id="MF_00377"/>
    </source>
</evidence>
<organism>
    <name type="scientific">Clostridium kluyveri (strain ATCC 8527 / DSM 555 / NBRC 12016 / NCIMB 10680 / K1)</name>
    <dbReference type="NCBI Taxonomy" id="431943"/>
    <lineage>
        <taxon>Bacteria</taxon>
        <taxon>Bacillati</taxon>
        <taxon>Bacillota</taxon>
        <taxon>Clostridia</taxon>
        <taxon>Eubacteriales</taxon>
        <taxon>Clostridiaceae</taxon>
        <taxon>Clostridium</taxon>
    </lineage>
</organism>
<feature type="chain" id="PRO_1000079945" description="Chromosomal replication initiator protein DnaA">
    <location>
        <begin position="1"/>
        <end position="451"/>
    </location>
</feature>
<feature type="region of interest" description="Domain I, interacts with DnaA modulators" evidence="1">
    <location>
        <begin position="1"/>
        <end position="73"/>
    </location>
</feature>
<feature type="region of interest" description="Domain II" evidence="1">
    <location>
        <begin position="73"/>
        <end position="112"/>
    </location>
</feature>
<feature type="region of interest" description="Domain III, AAA+ region" evidence="1">
    <location>
        <begin position="113"/>
        <end position="329"/>
    </location>
</feature>
<feature type="region of interest" description="Domain IV, binds dsDNA" evidence="1">
    <location>
        <begin position="330"/>
        <end position="451"/>
    </location>
</feature>
<feature type="binding site" evidence="1">
    <location>
        <position position="157"/>
    </location>
    <ligand>
        <name>ATP</name>
        <dbReference type="ChEBI" id="CHEBI:30616"/>
    </ligand>
</feature>
<feature type="binding site" evidence="1">
    <location>
        <position position="159"/>
    </location>
    <ligand>
        <name>ATP</name>
        <dbReference type="ChEBI" id="CHEBI:30616"/>
    </ligand>
</feature>
<feature type="binding site" evidence="1">
    <location>
        <position position="160"/>
    </location>
    <ligand>
        <name>ATP</name>
        <dbReference type="ChEBI" id="CHEBI:30616"/>
    </ligand>
</feature>
<feature type="binding site" evidence="1">
    <location>
        <position position="161"/>
    </location>
    <ligand>
        <name>ATP</name>
        <dbReference type="ChEBI" id="CHEBI:30616"/>
    </ligand>
</feature>
<name>DNAA_CLOK5</name>
<comment type="function">
    <text evidence="1">Plays an essential role in the initiation and regulation of chromosomal replication. ATP-DnaA binds to the origin of replication (oriC) to initiate formation of the DNA replication initiation complex once per cell cycle. Binds the DnaA box (a 9 base pair repeat at the origin) and separates the double-stranded (ds)DNA. Forms a right-handed helical filament on oriC DNA; dsDNA binds to the exterior of the filament while single-stranded (ss)DNA is stabiized in the filament's interior. The ATP-DnaA-oriC complex binds and stabilizes one strand of the AT-rich DNA unwinding element (DUE), permitting loading of DNA polymerase. After initiation quickly degrades to an ADP-DnaA complex that is not apt for DNA replication. Binds acidic phospholipids.</text>
</comment>
<comment type="subunit">
    <text evidence="1">Oligomerizes as a right-handed, spiral filament on DNA at oriC.</text>
</comment>
<comment type="subcellular location">
    <subcellularLocation>
        <location evidence="1">Cytoplasm</location>
    </subcellularLocation>
</comment>
<comment type="domain">
    <text evidence="1">Domain I is involved in oligomerization and binding regulators, domain II is flexibile and of varying length in different bacteria, domain III forms the AAA+ region, while domain IV binds dsDNA.</text>
</comment>
<comment type="similarity">
    <text evidence="1">Belongs to the DnaA family.</text>
</comment>